<organism>
    <name type="scientific">Salmonella paratyphi B (strain ATCC BAA-1250 / SPB7)</name>
    <dbReference type="NCBI Taxonomy" id="1016998"/>
    <lineage>
        <taxon>Bacteria</taxon>
        <taxon>Pseudomonadati</taxon>
        <taxon>Pseudomonadota</taxon>
        <taxon>Gammaproteobacteria</taxon>
        <taxon>Enterobacterales</taxon>
        <taxon>Enterobacteriaceae</taxon>
        <taxon>Salmonella</taxon>
    </lineage>
</organism>
<sequence length="111" mass="12075">MIGVVLVLASLLSVGGQLCQKQATRPLTTGGRRRHLMLWLGLALICMGAAMVLWLLVLQTLPVGIAYPMLSLNFVWVTLAAWKIWHEQVPPRHWLGVALIISGIIILGSAA</sequence>
<reference key="1">
    <citation type="submission" date="2007-11" db="EMBL/GenBank/DDBJ databases">
        <authorList>
            <consortium name="The Salmonella enterica serovar Paratyphi B Genome Sequencing Project"/>
            <person name="McClelland M."/>
            <person name="Sanderson E.K."/>
            <person name="Porwollik S."/>
            <person name="Spieth J."/>
            <person name="Clifton W.S."/>
            <person name="Fulton R."/>
            <person name="Cordes M."/>
            <person name="Wollam A."/>
            <person name="Shah N."/>
            <person name="Pepin K."/>
            <person name="Bhonagiri V."/>
            <person name="Nash W."/>
            <person name="Johnson M."/>
            <person name="Thiruvilangam P."/>
            <person name="Wilson R."/>
        </authorList>
    </citation>
    <scope>NUCLEOTIDE SEQUENCE [LARGE SCALE GENOMIC DNA]</scope>
    <source>
        <strain>ATCC BAA-1250 / SPB7</strain>
    </source>
</reference>
<dbReference type="EMBL" id="CP000886">
    <property type="protein sequence ID" value="ABX66105.1"/>
    <property type="molecule type" value="Genomic_DNA"/>
</dbReference>
<dbReference type="RefSeq" id="WP_000580688.1">
    <property type="nucleotide sequence ID" value="NC_010102.1"/>
</dbReference>
<dbReference type="SMR" id="A9N5A9"/>
<dbReference type="KEGG" id="spq:SPAB_00679"/>
<dbReference type="PATRIC" id="fig|1016998.12.peg.639"/>
<dbReference type="HOGENOM" id="CLU_131462_5_1_6"/>
<dbReference type="BioCyc" id="SENT1016998:SPAB_RS02825-MONOMER"/>
<dbReference type="UniPathway" id="UPA00030"/>
<dbReference type="Proteomes" id="UP000008556">
    <property type="component" value="Chromosome"/>
</dbReference>
<dbReference type="GO" id="GO:0005886">
    <property type="term" value="C:plasma membrane"/>
    <property type="evidence" value="ECO:0007669"/>
    <property type="project" value="UniProtKB-SubCell"/>
</dbReference>
<dbReference type="GO" id="GO:1901505">
    <property type="term" value="F:carbohydrate derivative transmembrane transporter activity"/>
    <property type="evidence" value="ECO:0007669"/>
    <property type="project" value="InterPro"/>
</dbReference>
<dbReference type="GO" id="GO:0009245">
    <property type="term" value="P:lipid A biosynthetic process"/>
    <property type="evidence" value="ECO:0007669"/>
    <property type="project" value="UniProtKB-UniRule"/>
</dbReference>
<dbReference type="GO" id="GO:0009103">
    <property type="term" value="P:lipopolysaccharide biosynthetic process"/>
    <property type="evidence" value="ECO:0007669"/>
    <property type="project" value="UniProtKB-UniRule"/>
</dbReference>
<dbReference type="FunFam" id="1.10.3730.20:FF:000002">
    <property type="entry name" value="Probable 4-amino-4-deoxy-L-arabinose-phosphoundecaprenol flippase subunit ArnE"/>
    <property type="match status" value="1"/>
</dbReference>
<dbReference type="Gene3D" id="1.10.3730.20">
    <property type="match status" value="1"/>
</dbReference>
<dbReference type="HAMAP" id="MF_01869">
    <property type="entry name" value="Flippase_ArnE"/>
    <property type="match status" value="1"/>
</dbReference>
<dbReference type="InterPro" id="IPR000620">
    <property type="entry name" value="EamA_dom"/>
</dbReference>
<dbReference type="InterPro" id="IPR022883">
    <property type="entry name" value="Flippase_ArnE"/>
</dbReference>
<dbReference type="InterPro" id="IPR000390">
    <property type="entry name" value="Small_drug/metabolite_transptr"/>
</dbReference>
<dbReference type="NCBIfam" id="NF011625">
    <property type="entry name" value="PRK15051.1"/>
    <property type="match status" value="1"/>
</dbReference>
<dbReference type="PANTHER" id="PTHR30561:SF23">
    <property type="entry name" value="4-AMINO-4-DEOXY-L-ARABINOSE-PHOSPHOUNDECAPRENOL FLIPPASE SUBUNIT ARNE-RELATED"/>
    <property type="match status" value="1"/>
</dbReference>
<dbReference type="PANTHER" id="PTHR30561">
    <property type="entry name" value="SMR FAMILY PROTON-DEPENDENT DRUG EFFLUX TRANSPORTER SUGE"/>
    <property type="match status" value="1"/>
</dbReference>
<dbReference type="Pfam" id="PF00892">
    <property type="entry name" value="EamA"/>
    <property type="match status" value="1"/>
</dbReference>
<dbReference type="SUPFAM" id="SSF103481">
    <property type="entry name" value="Multidrug resistance efflux transporter EmrE"/>
    <property type="match status" value="1"/>
</dbReference>
<evidence type="ECO:0000255" key="1">
    <source>
        <dbReference type="HAMAP-Rule" id="MF_01869"/>
    </source>
</evidence>
<accession>A9N5A9</accession>
<keyword id="KW-0997">Cell inner membrane</keyword>
<keyword id="KW-1003">Cell membrane</keyword>
<keyword id="KW-0441">Lipid A biosynthesis</keyword>
<keyword id="KW-0444">Lipid biosynthesis</keyword>
<keyword id="KW-0443">Lipid metabolism</keyword>
<keyword id="KW-0448">Lipopolysaccharide biosynthesis</keyword>
<keyword id="KW-0472">Membrane</keyword>
<keyword id="KW-0812">Transmembrane</keyword>
<keyword id="KW-1133">Transmembrane helix</keyword>
<keyword id="KW-0813">Transport</keyword>
<proteinExistence type="inferred from homology"/>
<protein>
    <recommendedName>
        <fullName evidence="1">Probable 4-amino-4-deoxy-L-arabinose-phosphoundecaprenol flippase subunit ArnE</fullName>
        <shortName evidence="1">L-Ara4N-phosphoundecaprenol flippase subunit ArnE</shortName>
    </recommendedName>
    <alternativeName>
        <fullName evidence="1">Undecaprenyl phosphate-aminoarabinose flippase subunit ArnE</fullName>
    </alternativeName>
</protein>
<feature type="chain" id="PRO_0000382999" description="Probable 4-amino-4-deoxy-L-arabinose-phosphoundecaprenol flippase subunit ArnE">
    <location>
        <begin position="1"/>
        <end position="111"/>
    </location>
</feature>
<feature type="transmembrane region" description="Helical" evidence="1">
    <location>
        <begin position="38"/>
        <end position="58"/>
    </location>
</feature>
<feature type="transmembrane region" description="Helical" evidence="1">
    <location>
        <begin position="61"/>
        <end position="81"/>
    </location>
</feature>
<feature type="transmembrane region" description="Helical" evidence="1">
    <location>
        <begin position="91"/>
        <end position="111"/>
    </location>
</feature>
<feature type="domain" description="EamA" evidence="1">
    <location>
        <begin position="40"/>
        <end position="109"/>
    </location>
</feature>
<name>ARNE_SALPB</name>
<gene>
    <name evidence="1" type="primary">arnE</name>
    <name type="ordered locus">SPAB_00679</name>
</gene>
<comment type="function">
    <text evidence="1">Translocates 4-amino-4-deoxy-L-arabinose-phosphoundecaprenol (alpha-L-Ara4N-phosphoundecaprenol) from the cytoplasmic to the periplasmic side of the inner membrane.</text>
</comment>
<comment type="pathway">
    <text evidence="1">Bacterial outer membrane biogenesis; lipopolysaccharide biosynthesis.</text>
</comment>
<comment type="subunit">
    <text evidence="1">Heterodimer of ArnE and ArnF.</text>
</comment>
<comment type="subcellular location">
    <subcellularLocation>
        <location evidence="1">Cell inner membrane</location>
        <topology evidence="1">Multi-pass membrane protein</topology>
    </subcellularLocation>
</comment>
<comment type="similarity">
    <text evidence="1">Belongs to the ArnE family.</text>
</comment>